<keyword id="KW-0067">ATP-binding</keyword>
<keyword id="KW-0997">Cell inner membrane</keyword>
<keyword id="KW-1003">Cell membrane</keyword>
<keyword id="KW-0406">Ion transport</keyword>
<keyword id="KW-0472">Membrane</keyword>
<keyword id="KW-0533">Nickel</keyword>
<keyword id="KW-0921">Nickel transport</keyword>
<keyword id="KW-0547">Nucleotide-binding</keyword>
<keyword id="KW-1278">Translocase</keyword>
<keyword id="KW-0813">Transport</keyword>
<dbReference type="EC" id="7.2.2.11" evidence="1"/>
<dbReference type="EMBL" id="CP000036">
    <property type="protein sequence ID" value="ABB67962.1"/>
    <property type="molecule type" value="Genomic_DNA"/>
</dbReference>
<dbReference type="RefSeq" id="WP_000173706.1">
    <property type="nucleotide sequence ID" value="NC_007613.1"/>
</dbReference>
<dbReference type="SMR" id="Q31VE6"/>
<dbReference type="KEGG" id="sbo:SBO_3477"/>
<dbReference type="HOGENOM" id="CLU_000604_1_23_6"/>
<dbReference type="Proteomes" id="UP000007067">
    <property type="component" value="Chromosome"/>
</dbReference>
<dbReference type="GO" id="GO:0005886">
    <property type="term" value="C:plasma membrane"/>
    <property type="evidence" value="ECO:0007669"/>
    <property type="project" value="UniProtKB-SubCell"/>
</dbReference>
<dbReference type="GO" id="GO:0015413">
    <property type="term" value="F:ABC-type nickel transporter activity"/>
    <property type="evidence" value="ECO:0007669"/>
    <property type="project" value="UniProtKB-EC"/>
</dbReference>
<dbReference type="GO" id="GO:0005524">
    <property type="term" value="F:ATP binding"/>
    <property type="evidence" value="ECO:0007669"/>
    <property type="project" value="UniProtKB-KW"/>
</dbReference>
<dbReference type="GO" id="GO:0016887">
    <property type="term" value="F:ATP hydrolysis activity"/>
    <property type="evidence" value="ECO:0007669"/>
    <property type="project" value="InterPro"/>
</dbReference>
<dbReference type="GO" id="GO:0016151">
    <property type="term" value="F:nickel cation binding"/>
    <property type="evidence" value="ECO:0007669"/>
    <property type="project" value="InterPro"/>
</dbReference>
<dbReference type="CDD" id="cd03257">
    <property type="entry name" value="ABC_NikE_OppD_transporters"/>
    <property type="match status" value="1"/>
</dbReference>
<dbReference type="FunFam" id="3.40.50.300:FF:001020">
    <property type="entry name" value="Nickel import ATP-binding protein NikE"/>
    <property type="match status" value="1"/>
</dbReference>
<dbReference type="Gene3D" id="3.40.50.300">
    <property type="entry name" value="P-loop containing nucleotide triphosphate hydrolases"/>
    <property type="match status" value="1"/>
</dbReference>
<dbReference type="InterPro" id="IPR003593">
    <property type="entry name" value="AAA+_ATPase"/>
</dbReference>
<dbReference type="InterPro" id="IPR050319">
    <property type="entry name" value="ABC_transp_ATP-bind"/>
</dbReference>
<dbReference type="InterPro" id="IPR003439">
    <property type="entry name" value="ABC_transporter-like_ATP-bd"/>
</dbReference>
<dbReference type="InterPro" id="IPR017871">
    <property type="entry name" value="ABC_transporter-like_CS"/>
</dbReference>
<dbReference type="InterPro" id="IPR014137">
    <property type="entry name" value="Nickel_NikE"/>
</dbReference>
<dbReference type="InterPro" id="IPR027417">
    <property type="entry name" value="P-loop_NTPase"/>
</dbReference>
<dbReference type="NCBIfam" id="TIGR02769">
    <property type="entry name" value="nickel_nikE"/>
    <property type="match status" value="1"/>
</dbReference>
<dbReference type="NCBIfam" id="NF007739">
    <property type="entry name" value="PRK10419.1"/>
    <property type="match status" value="1"/>
</dbReference>
<dbReference type="PANTHER" id="PTHR43776:SF7">
    <property type="entry name" value="D,D-DIPEPTIDE TRANSPORT ATP-BINDING PROTEIN DDPF-RELATED"/>
    <property type="match status" value="1"/>
</dbReference>
<dbReference type="PANTHER" id="PTHR43776">
    <property type="entry name" value="TRANSPORT ATP-BINDING PROTEIN"/>
    <property type="match status" value="1"/>
</dbReference>
<dbReference type="Pfam" id="PF00005">
    <property type="entry name" value="ABC_tran"/>
    <property type="match status" value="1"/>
</dbReference>
<dbReference type="SMART" id="SM00382">
    <property type="entry name" value="AAA"/>
    <property type="match status" value="1"/>
</dbReference>
<dbReference type="SUPFAM" id="SSF52540">
    <property type="entry name" value="P-loop containing nucleoside triphosphate hydrolases"/>
    <property type="match status" value="1"/>
</dbReference>
<dbReference type="PROSITE" id="PS00211">
    <property type="entry name" value="ABC_TRANSPORTER_1"/>
    <property type="match status" value="1"/>
</dbReference>
<dbReference type="PROSITE" id="PS50893">
    <property type="entry name" value="ABC_TRANSPORTER_2"/>
    <property type="match status" value="1"/>
</dbReference>
<dbReference type="PROSITE" id="PS51248">
    <property type="entry name" value="NIKE"/>
    <property type="match status" value="1"/>
</dbReference>
<gene>
    <name evidence="1" type="primary">nikE</name>
    <name type="ordered locus">SBO_3477</name>
</gene>
<protein>
    <recommendedName>
        <fullName evidence="1">Nickel import ATP-binding protein NikE</fullName>
        <ecNumber evidence="1">7.2.2.11</ecNumber>
    </recommendedName>
</protein>
<organism>
    <name type="scientific">Shigella boydii serotype 4 (strain Sb227)</name>
    <dbReference type="NCBI Taxonomy" id="300268"/>
    <lineage>
        <taxon>Bacteria</taxon>
        <taxon>Pseudomonadati</taxon>
        <taxon>Pseudomonadota</taxon>
        <taxon>Gammaproteobacteria</taxon>
        <taxon>Enterobacterales</taxon>
        <taxon>Enterobacteriaceae</taxon>
        <taxon>Shigella</taxon>
    </lineage>
</organism>
<name>NIKE_SHIBS</name>
<feature type="chain" id="PRO_0000274123" description="Nickel import ATP-binding protein NikE">
    <location>
        <begin position="1"/>
        <end position="268"/>
    </location>
</feature>
<feature type="domain" description="ABC transporter" evidence="1">
    <location>
        <begin position="4"/>
        <end position="252"/>
    </location>
</feature>
<feature type="binding site" evidence="1">
    <location>
        <begin position="45"/>
        <end position="52"/>
    </location>
    <ligand>
        <name>ATP</name>
        <dbReference type="ChEBI" id="CHEBI:30616"/>
    </ligand>
</feature>
<reference key="1">
    <citation type="journal article" date="2005" name="Nucleic Acids Res.">
        <title>Genome dynamics and diversity of Shigella species, the etiologic agents of bacillary dysentery.</title>
        <authorList>
            <person name="Yang F."/>
            <person name="Yang J."/>
            <person name="Zhang X."/>
            <person name="Chen L."/>
            <person name="Jiang Y."/>
            <person name="Yan Y."/>
            <person name="Tang X."/>
            <person name="Wang J."/>
            <person name="Xiong Z."/>
            <person name="Dong J."/>
            <person name="Xue Y."/>
            <person name="Zhu Y."/>
            <person name="Xu X."/>
            <person name="Sun L."/>
            <person name="Chen S."/>
            <person name="Nie H."/>
            <person name="Peng J."/>
            <person name="Xu J."/>
            <person name="Wang Y."/>
            <person name="Yuan Z."/>
            <person name="Wen Y."/>
            <person name="Yao Z."/>
            <person name="Shen Y."/>
            <person name="Qiang B."/>
            <person name="Hou Y."/>
            <person name="Yu J."/>
            <person name="Jin Q."/>
        </authorList>
    </citation>
    <scope>NUCLEOTIDE SEQUENCE [LARGE SCALE GENOMIC DNA]</scope>
    <source>
        <strain>Sb227</strain>
    </source>
</reference>
<accession>Q31VE6</accession>
<evidence type="ECO:0000255" key="1">
    <source>
        <dbReference type="HAMAP-Rule" id="MF_01712"/>
    </source>
</evidence>
<proteinExistence type="inferred from homology"/>
<sequence>MTLLNVSGLSHHYAHGGFSGKHQHQAVLNNVSLTLKSGETVALLGRSGCGKSTLARLLVGLESPSQGNISWRGESLAKLNRAQRKAFRRDIQMVFQDSISAVNPRKTVREILREPMRHLLSLKKSEQLARASEMLKAVDLDDSVLDKRPPQLSGGQLQRVCLARALAVEPKLLILDETVSNLDLVLQAGVIRLLKKLQQQFGTACLFITHDLRLVERFCQRVMVMDNGQIVETQAVGDKLTFSSDAGRVLQNAVLPAFPVRRRATEKV</sequence>
<comment type="function">
    <text evidence="1">Part of the ABC transporter complex NikABCDE involved in nickel import. Responsible for energy coupling to the transport system.</text>
</comment>
<comment type="catalytic activity">
    <reaction evidence="1">
        <text>Ni(2+)(out) + ATP + H2O = Ni(2+)(in) + ADP + phosphate + H(+)</text>
        <dbReference type="Rhea" id="RHEA:15557"/>
        <dbReference type="ChEBI" id="CHEBI:15377"/>
        <dbReference type="ChEBI" id="CHEBI:15378"/>
        <dbReference type="ChEBI" id="CHEBI:30616"/>
        <dbReference type="ChEBI" id="CHEBI:43474"/>
        <dbReference type="ChEBI" id="CHEBI:49786"/>
        <dbReference type="ChEBI" id="CHEBI:456216"/>
        <dbReference type="EC" id="7.2.2.11"/>
    </reaction>
</comment>
<comment type="subunit">
    <text evidence="1">The complex is composed of two ATP-binding proteins (NikD and NikE), two transmembrane proteins (NikB and NikC) and a solute-binding protein (NikA).</text>
</comment>
<comment type="subcellular location">
    <subcellularLocation>
        <location evidence="1">Cell inner membrane</location>
        <topology evidence="1">Peripheral membrane protein</topology>
    </subcellularLocation>
</comment>
<comment type="similarity">
    <text evidence="1">Belongs to the ABC transporter superfamily. Nickel importer (TC 3.A.1.5.3) family.</text>
</comment>